<evidence type="ECO:0000255" key="1">
    <source>
        <dbReference type="HAMAP-Rule" id="MF_00293"/>
    </source>
</evidence>
<protein>
    <recommendedName>
        <fullName evidence="1">Protein PsbN</fullName>
    </recommendedName>
</protein>
<accession>Q06GN2</accession>
<keyword id="KW-0150">Chloroplast</keyword>
<keyword id="KW-0472">Membrane</keyword>
<keyword id="KW-0934">Plastid</keyword>
<keyword id="KW-0793">Thylakoid</keyword>
<keyword id="KW-0812">Transmembrane</keyword>
<keyword id="KW-1133">Transmembrane helix</keyword>
<gene>
    <name evidence="1" type="primary">psbN</name>
</gene>
<organism>
    <name type="scientific">Piper cenocladum</name>
    <name type="common">Ant piper</name>
    <dbReference type="NCBI Taxonomy" id="398741"/>
    <lineage>
        <taxon>Eukaryota</taxon>
        <taxon>Viridiplantae</taxon>
        <taxon>Streptophyta</taxon>
        <taxon>Embryophyta</taxon>
        <taxon>Tracheophyta</taxon>
        <taxon>Spermatophyta</taxon>
        <taxon>Magnoliopsida</taxon>
        <taxon>Magnoliidae</taxon>
        <taxon>Piperales</taxon>
        <taxon>Piperaceae</taxon>
        <taxon>Piper</taxon>
    </lineage>
</organism>
<comment type="function">
    <text evidence="1">May play a role in photosystem I and II biogenesis.</text>
</comment>
<comment type="subcellular location">
    <subcellularLocation>
        <location evidence="1">Plastid</location>
        <location evidence="1">Chloroplast thylakoid membrane</location>
        <topology evidence="1">Single-pass membrane protein</topology>
    </subcellularLocation>
</comment>
<comment type="similarity">
    <text evidence="1">Belongs to the PsbN family.</text>
</comment>
<comment type="caution">
    <text evidence="1">Originally thought to be a component of PSII; based on experiments in Synechocystis, N.tabacum and barley, and its absence from PSII in T.elongatus and T.vulcanus, this is probably not true.</text>
</comment>
<name>PSBN_PIPCE</name>
<reference key="1">
    <citation type="journal article" date="2006" name="BMC Evol. Biol.">
        <title>Complete plastid genome sequences of Drimys, Liriodendron, and Piper: implications for the phylogenetic relationships of magnoliids.</title>
        <authorList>
            <person name="Cai Z."/>
            <person name="Penaflor C."/>
            <person name="Kuehl J.V."/>
            <person name="Leebens-Mack J."/>
            <person name="Carlson J.E."/>
            <person name="dePamphilis C.W."/>
            <person name="Boore J.L."/>
            <person name="Jansen R.K."/>
        </authorList>
    </citation>
    <scope>NUCLEOTIDE SEQUENCE [LARGE SCALE GENOMIC DNA]</scope>
</reference>
<dbReference type="EMBL" id="DQ887677">
    <property type="protein sequence ID" value="ABI14499.1"/>
    <property type="molecule type" value="Genomic_DNA"/>
</dbReference>
<dbReference type="RefSeq" id="YP_784501.1">
    <property type="nucleotide sequence ID" value="NC_008457.1"/>
</dbReference>
<dbReference type="SMR" id="Q06GN2"/>
<dbReference type="GeneID" id="4363646"/>
<dbReference type="GO" id="GO:0009535">
    <property type="term" value="C:chloroplast thylakoid membrane"/>
    <property type="evidence" value="ECO:0007669"/>
    <property type="project" value="UniProtKB-SubCell"/>
</dbReference>
<dbReference type="GO" id="GO:0015979">
    <property type="term" value="P:photosynthesis"/>
    <property type="evidence" value="ECO:0007669"/>
    <property type="project" value="InterPro"/>
</dbReference>
<dbReference type="HAMAP" id="MF_00293">
    <property type="entry name" value="PSII_PsbN"/>
    <property type="match status" value="1"/>
</dbReference>
<dbReference type="InterPro" id="IPR003398">
    <property type="entry name" value="PSII_PsbN"/>
</dbReference>
<dbReference type="PANTHER" id="PTHR35326">
    <property type="entry name" value="PROTEIN PSBN"/>
    <property type="match status" value="1"/>
</dbReference>
<dbReference type="PANTHER" id="PTHR35326:SF3">
    <property type="entry name" value="PROTEIN PSBN"/>
    <property type="match status" value="1"/>
</dbReference>
<dbReference type="Pfam" id="PF02468">
    <property type="entry name" value="PsbN"/>
    <property type="match status" value="1"/>
</dbReference>
<feature type="chain" id="PRO_0000276278" description="Protein PsbN">
    <location>
        <begin position="1"/>
        <end position="43"/>
    </location>
</feature>
<feature type="transmembrane region" description="Helical" evidence="1">
    <location>
        <begin position="5"/>
        <end position="27"/>
    </location>
</feature>
<sequence>METATLVTIFISGSLVSFTGYALYTAFGQPSQQLRDPFEEHGD</sequence>
<geneLocation type="chloroplast"/>
<proteinExistence type="inferred from homology"/>